<feature type="chain" id="PRO_0000197633" description="Opsin Rh5">
    <location>
        <begin position="1"/>
        <end position="382"/>
    </location>
</feature>
<feature type="topological domain" description="Extracellular">
    <location>
        <begin position="1"/>
        <end position="49"/>
    </location>
</feature>
<feature type="transmembrane region" description="Helical; Name=1" evidence="2">
    <location>
        <begin position="50"/>
        <end position="76"/>
    </location>
</feature>
<feature type="topological domain" description="Cytoplasmic">
    <location>
        <begin position="77"/>
        <end position="88"/>
    </location>
</feature>
<feature type="transmembrane region" description="Helical; Name=2" evidence="2">
    <location>
        <begin position="89"/>
        <end position="112"/>
    </location>
</feature>
<feature type="topological domain" description="Extracellular">
    <location>
        <begin position="113"/>
        <end position="127"/>
    </location>
</feature>
<feature type="transmembrane region" description="Helical; Name=3" evidence="2">
    <location>
        <begin position="128"/>
        <end position="147"/>
    </location>
</feature>
<feature type="topological domain" description="Cytoplasmic">
    <location>
        <begin position="148"/>
        <end position="165"/>
    </location>
</feature>
<feature type="transmembrane region" description="Helical; Name=4" evidence="2">
    <location>
        <begin position="166"/>
        <end position="190"/>
    </location>
</feature>
<feature type="topological domain" description="Extracellular">
    <location>
        <begin position="191"/>
        <end position="214"/>
    </location>
</feature>
<feature type="transmembrane region" description="Helical; Name=5" evidence="2">
    <location>
        <begin position="215"/>
        <end position="242"/>
    </location>
</feature>
<feature type="topological domain" description="Cytoplasmic">
    <location>
        <begin position="243"/>
        <end position="278"/>
    </location>
</feature>
<feature type="transmembrane region" description="Helical; Name=6" evidence="2">
    <location>
        <begin position="279"/>
        <end position="302"/>
    </location>
</feature>
<feature type="topological domain" description="Extracellular">
    <location>
        <begin position="303"/>
        <end position="310"/>
    </location>
</feature>
<feature type="transmembrane region" description="Helical; Name=7" evidence="2">
    <location>
        <begin position="311"/>
        <end position="335"/>
    </location>
</feature>
<feature type="topological domain" description="Cytoplasmic">
    <location>
        <begin position="336"/>
        <end position="382"/>
    </location>
</feature>
<feature type="region of interest" description="Disordered" evidence="4">
    <location>
        <begin position="357"/>
        <end position="382"/>
    </location>
</feature>
<feature type="compositionally biased region" description="Polar residues" evidence="4">
    <location>
        <begin position="358"/>
        <end position="382"/>
    </location>
</feature>
<feature type="modified residue" description="N6-(retinylidene)lysine" evidence="1">
    <location>
        <position position="322"/>
    </location>
</feature>
<feature type="glycosylation site" description="N-linked (GlcNAc...) asparagine" evidence="2">
    <location>
        <position position="14"/>
    </location>
</feature>
<feature type="disulfide bond" evidence="3">
    <location>
        <begin position="124"/>
        <end position="201"/>
    </location>
</feature>
<feature type="sequence conflict" description="In Ref. 2; AAB38966." evidence="6" ref="2">
    <original>SV</original>
    <variation>RL</variation>
    <location>
        <begin position="21"/>
        <end position="22"/>
    </location>
</feature>
<feature type="sequence conflict" description="In Ref. 2; AAB38966." evidence="6" ref="2">
    <original>Y</original>
    <variation>N</variation>
    <location>
        <position position="56"/>
    </location>
</feature>
<feature type="sequence conflict" description="In Ref. 2; AAB38966." evidence="6" ref="2">
    <original>F</original>
    <variation>S</variation>
    <location>
        <position position="147"/>
    </location>
</feature>
<feature type="sequence conflict" description="In Ref. 2; AAB38966." evidence="6" ref="2">
    <original>F</original>
    <variation>W</variation>
    <location>
        <position position="180"/>
    </location>
</feature>
<feature type="sequence conflict" description="In Ref. 2; AAB38966." evidence="6" ref="2">
    <original>G</original>
    <variation>D</variation>
    <location>
        <position position="190"/>
    </location>
</feature>
<feature type="sequence conflict" description="In Ref. 2; AAB38966." evidence="6" ref="2">
    <original>A</original>
    <variation>P</variation>
    <location>
        <position position="263"/>
    </location>
</feature>
<organism>
    <name type="scientific">Drosophila melanogaster</name>
    <name type="common">Fruit fly</name>
    <dbReference type="NCBI Taxonomy" id="7227"/>
    <lineage>
        <taxon>Eukaryota</taxon>
        <taxon>Metazoa</taxon>
        <taxon>Ecdysozoa</taxon>
        <taxon>Arthropoda</taxon>
        <taxon>Hexapoda</taxon>
        <taxon>Insecta</taxon>
        <taxon>Pterygota</taxon>
        <taxon>Neoptera</taxon>
        <taxon>Endopterygota</taxon>
        <taxon>Diptera</taxon>
        <taxon>Brachycera</taxon>
        <taxon>Muscomorpha</taxon>
        <taxon>Ephydroidea</taxon>
        <taxon>Drosophilidae</taxon>
        <taxon>Drosophila</taxon>
        <taxon>Sophophora</taxon>
    </lineage>
</organism>
<keyword id="KW-1003">Cell membrane</keyword>
<keyword id="KW-0966">Cell projection</keyword>
<keyword id="KW-0157">Chromophore</keyword>
<keyword id="KW-1015">Disulfide bond</keyword>
<keyword id="KW-0297">G-protein coupled receptor</keyword>
<keyword id="KW-0325">Glycoprotein</keyword>
<keyword id="KW-0472">Membrane</keyword>
<keyword id="KW-0597">Phosphoprotein</keyword>
<keyword id="KW-0600">Photoreceptor protein</keyword>
<keyword id="KW-0675">Receptor</keyword>
<keyword id="KW-1185">Reference proteome</keyword>
<keyword id="KW-0681">Retinal protein</keyword>
<keyword id="KW-0716">Sensory transduction</keyword>
<keyword id="KW-0807">Transducer</keyword>
<keyword id="KW-0812">Transmembrane</keyword>
<keyword id="KW-1133">Transmembrane helix</keyword>
<keyword id="KW-0844">Vision</keyword>
<name>OPS5_DROME</name>
<reference key="1">
    <citation type="journal article" date="1996" name="Neuron">
        <title>Identification of a novel Drosophila opsin reveals specific patterning of the R7 and R8 photoreceptor cells.</title>
        <authorList>
            <person name="Chou W.-H."/>
            <person name="Hall K.J."/>
            <person name="Wilson D.B."/>
            <person name="Wideman C.L."/>
            <person name="Townson S.M."/>
            <person name="Chadwell L.V."/>
            <person name="Britt S.G."/>
        </authorList>
    </citation>
    <scope>NUCLEOTIDE SEQUENCE [GENOMIC DNA]</scope>
    <scope>SUBCELLULAR LOCATION</scope>
    <scope>TISSUE SPECIFICITY</scope>
    <source>
        <strain>Canton-S</strain>
        <tissue>Retina</tissue>
    </source>
</reference>
<reference key="2">
    <citation type="journal article" date="1997" name="Development">
        <title>A new rhodopsin in R8 photoreceptors of Drosophila: evidence for coordinate expression with Rh3 in R7 cells.</title>
        <authorList>
            <person name="Papatsenko D."/>
            <person name="Sheng G."/>
            <person name="Desplan C."/>
        </authorList>
    </citation>
    <scope>NUCLEOTIDE SEQUENCE [MRNA]</scope>
</reference>
<reference key="3">
    <citation type="journal article" date="2000" name="Science">
        <title>The genome sequence of Drosophila melanogaster.</title>
        <authorList>
            <person name="Adams M.D."/>
            <person name="Celniker S.E."/>
            <person name="Holt R.A."/>
            <person name="Evans C.A."/>
            <person name="Gocayne J.D."/>
            <person name="Amanatides P.G."/>
            <person name="Scherer S.E."/>
            <person name="Li P.W."/>
            <person name="Hoskins R.A."/>
            <person name="Galle R.F."/>
            <person name="George R.A."/>
            <person name="Lewis S.E."/>
            <person name="Richards S."/>
            <person name="Ashburner M."/>
            <person name="Henderson S.N."/>
            <person name="Sutton G.G."/>
            <person name="Wortman J.R."/>
            <person name="Yandell M.D."/>
            <person name="Zhang Q."/>
            <person name="Chen L.X."/>
            <person name="Brandon R.C."/>
            <person name="Rogers Y.-H.C."/>
            <person name="Blazej R.G."/>
            <person name="Champe M."/>
            <person name="Pfeiffer B.D."/>
            <person name="Wan K.H."/>
            <person name="Doyle C."/>
            <person name="Baxter E.G."/>
            <person name="Helt G."/>
            <person name="Nelson C.R."/>
            <person name="Miklos G.L.G."/>
            <person name="Abril J.F."/>
            <person name="Agbayani A."/>
            <person name="An H.-J."/>
            <person name="Andrews-Pfannkoch C."/>
            <person name="Baldwin D."/>
            <person name="Ballew R.M."/>
            <person name="Basu A."/>
            <person name="Baxendale J."/>
            <person name="Bayraktaroglu L."/>
            <person name="Beasley E.M."/>
            <person name="Beeson K.Y."/>
            <person name="Benos P.V."/>
            <person name="Berman B.P."/>
            <person name="Bhandari D."/>
            <person name="Bolshakov S."/>
            <person name="Borkova D."/>
            <person name="Botchan M.R."/>
            <person name="Bouck J."/>
            <person name="Brokstein P."/>
            <person name="Brottier P."/>
            <person name="Burtis K.C."/>
            <person name="Busam D.A."/>
            <person name="Butler H."/>
            <person name="Cadieu E."/>
            <person name="Center A."/>
            <person name="Chandra I."/>
            <person name="Cherry J.M."/>
            <person name="Cawley S."/>
            <person name="Dahlke C."/>
            <person name="Davenport L.B."/>
            <person name="Davies P."/>
            <person name="de Pablos B."/>
            <person name="Delcher A."/>
            <person name="Deng Z."/>
            <person name="Mays A.D."/>
            <person name="Dew I."/>
            <person name="Dietz S.M."/>
            <person name="Dodson K."/>
            <person name="Doup L.E."/>
            <person name="Downes M."/>
            <person name="Dugan-Rocha S."/>
            <person name="Dunkov B.C."/>
            <person name="Dunn P."/>
            <person name="Durbin K.J."/>
            <person name="Evangelista C.C."/>
            <person name="Ferraz C."/>
            <person name="Ferriera S."/>
            <person name="Fleischmann W."/>
            <person name="Fosler C."/>
            <person name="Gabrielian A.E."/>
            <person name="Garg N.S."/>
            <person name="Gelbart W.M."/>
            <person name="Glasser K."/>
            <person name="Glodek A."/>
            <person name="Gong F."/>
            <person name="Gorrell J.H."/>
            <person name="Gu Z."/>
            <person name="Guan P."/>
            <person name="Harris M."/>
            <person name="Harris N.L."/>
            <person name="Harvey D.A."/>
            <person name="Heiman T.J."/>
            <person name="Hernandez J.R."/>
            <person name="Houck J."/>
            <person name="Hostin D."/>
            <person name="Houston K.A."/>
            <person name="Howland T.J."/>
            <person name="Wei M.-H."/>
            <person name="Ibegwam C."/>
            <person name="Jalali M."/>
            <person name="Kalush F."/>
            <person name="Karpen G.H."/>
            <person name="Ke Z."/>
            <person name="Kennison J.A."/>
            <person name="Ketchum K.A."/>
            <person name="Kimmel B.E."/>
            <person name="Kodira C.D."/>
            <person name="Kraft C.L."/>
            <person name="Kravitz S."/>
            <person name="Kulp D."/>
            <person name="Lai Z."/>
            <person name="Lasko P."/>
            <person name="Lei Y."/>
            <person name="Levitsky A.A."/>
            <person name="Li J.H."/>
            <person name="Li Z."/>
            <person name="Liang Y."/>
            <person name="Lin X."/>
            <person name="Liu X."/>
            <person name="Mattei B."/>
            <person name="McIntosh T.C."/>
            <person name="McLeod M.P."/>
            <person name="McPherson D."/>
            <person name="Merkulov G."/>
            <person name="Milshina N.V."/>
            <person name="Mobarry C."/>
            <person name="Morris J."/>
            <person name="Moshrefi A."/>
            <person name="Mount S.M."/>
            <person name="Moy M."/>
            <person name="Murphy B."/>
            <person name="Murphy L."/>
            <person name="Muzny D.M."/>
            <person name="Nelson D.L."/>
            <person name="Nelson D.R."/>
            <person name="Nelson K.A."/>
            <person name="Nixon K."/>
            <person name="Nusskern D.R."/>
            <person name="Pacleb J.M."/>
            <person name="Palazzolo M."/>
            <person name="Pittman G.S."/>
            <person name="Pan S."/>
            <person name="Pollard J."/>
            <person name="Puri V."/>
            <person name="Reese M.G."/>
            <person name="Reinert K."/>
            <person name="Remington K."/>
            <person name="Saunders R.D.C."/>
            <person name="Scheeler F."/>
            <person name="Shen H."/>
            <person name="Shue B.C."/>
            <person name="Siden-Kiamos I."/>
            <person name="Simpson M."/>
            <person name="Skupski M.P."/>
            <person name="Smith T.J."/>
            <person name="Spier E."/>
            <person name="Spradling A.C."/>
            <person name="Stapleton M."/>
            <person name="Strong R."/>
            <person name="Sun E."/>
            <person name="Svirskas R."/>
            <person name="Tector C."/>
            <person name="Turner R."/>
            <person name="Venter E."/>
            <person name="Wang A.H."/>
            <person name="Wang X."/>
            <person name="Wang Z.-Y."/>
            <person name="Wassarman D.A."/>
            <person name="Weinstock G.M."/>
            <person name="Weissenbach J."/>
            <person name="Williams S.M."/>
            <person name="Woodage T."/>
            <person name="Worley K.C."/>
            <person name="Wu D."/>
            <person name="Yang S."/>
            <person name="Yao Q.A."/>
            <person name="Ye J."/>
            <person name="Yeh R.-F."/>
            <person name="Zaveri J.S."/>
            <person name="Zhan M."/>
            <person name="Zhang G."/>
            <person name="Zhao Q."/>
            <person name="Zheng L."/>
            <person name="Zheng X.H."/>
            <person name="Zhong F.N."/>
            <person name="Zhong W."/>
            <person name="Zhou X."/>
            <person name="Zhu S.C."/>
            <person name="Zhu X."/>
            <person name="Smith H.O."/>
            <person name="Gibbs R.A."/>
            <person name="Myers E.W."/>
            <person name="Rubin G.M."/>
            <person name="Venter J.C."/>
        </authorList>
    </citation>
    <scope>NUCLEOTIDE SEQUENCE [LARGE SCALE GENOMIC DNA]</scope>
    <source>
        <strain>Berkeley</strain>
    </source>
</reference>
<reference key="4">
    <citation type="journal article" date="2002" name="Genome Biol.">
        <title>Annotation of the Drosophila melanogaster euchromatic genome: a systematic review.</title>
        <authorList>
            <person name="Misra S."/>
            <person name="Crosby M.A."/>
            <person name="Mungall C.J."/>
            <person name="Matthews B.B."/>
            <person name="Campbell K.S."/>
            <person name="Hradecky P."/>
            <person name="Huang Y."/>
            <person name="Kaminker J.S."/>
            <person name="Millburn G.H."/>
            <person name="Prochnik S.E."/>
            <person name="Smith C.D."/>
            <person name="Tupy J.L."/>
            <person name="Whitfield E.J."/>
            <person name="Bayraktaroglu L."/>
            <person name="Berman B.P."/>
            <person name="Bettencourt B.R."/>
            <person name="Celniker S.E."/>
            <person name="de Grey A.D.N.J."/>
            <person name="Drysdale R.A."/>
            <person name="Harris N.L."/>
            <person name="Richter J."/>
            <person name="Russo S."/>
            <person name="Schroeder A.J."/>
            <person name="Shu S.Q."/>
            <person name="Stapleton M."/>
            <person name="Yamada C."/>
            <person name="Ashburner M."/>
            <person name="Gelbart W.M."/>
            <person name="Rubin G.M."/>
            <person name="Lewis S.E."/>
        </authorList>
    </citation>
    <scope>GENOME REANNOTATION</scope>
    <source>
        <strain>Berkeley</strain>
    </source>
</reference>
<reference key="5">
    <citation type="journal article" date="2002" name="Genome Biol.">
        <title>A Drosophila full-length cDNA resource.</title>
        <authorList>
            <person name="Stapleton M."/>
            <person name="Carlson J.W."/>
            <person name="Brokstein P."/>
            <person name="Yu C."/>
            <person name="Champe M."/>
            <person name="George R.A."/>
            <person name="Guarin H."/>
            <person name="Kronmiller B."/>
            <person name="Pacleb J.M."/>
            <person name="Park S."/>
            <person name="Wan K.H."/>
            <person name="Rubin G.M."/>
            <person name="Celniker S.E."/>
        </authorList>
    </citation>
    <scope>NUCLEOTIDE SEQUENCE [LARGE SCALE MRNA]</scope>
    <source>
        <strain>Berkeley</strain>
        <tissue>Head</tissue>
    </source>
</reference>
<comment type="function">
    <text>Visual pigments are the light-absorbing molecules that mediate vision. They consist of an apoprotein, opsin, covalently linked to cis-retinal.</text>
</comment>
<comment type="subcellular location">
    <subcellularLocation>
        <location evidence="5">Cell projection</location>
        <location evidence="5">Rhabdomere membrane</location>
        <topology evidence="6">Multi-pass membrane protein</topology>
    </subcellularLocation>
</comment>
<comment type="tissue specificity">
    <text evidence="5">Expressed specifically in the retina. Each Drosophila eye is composed of 800 facets or ommatidia. Each ommatidium contains 8 photoreceptor cells (R1-R8), the R1 to R6 cells are outer cells, while R7 and R8 are inner cells. Rh5 is expressed only in R8 photoreceptor cells in a subset of ommatidia (PubMed:8982159).</text>
</comment>
<comment type="PTM">
    <text evidence="1">Phosphorylated on some or all of the serine and threonine residues present in the C-terminal region.</text>
</comment>
<comment type="similarity">
    <text evidence="3">Belongs to the G-protein coupled receptor 1 family. Opsin subfamily.</text>
</comment>
<gene>
    <name type="primary">Rh5</name>
    <name type="ORF">CG5279</name>
</gene>
<protein>
    <recommendedName>
        <fullName>Opsin Rh5</fullName>
    </recommendedName>
</protein>
<accession>P91657</accession>
<accession>P91671</accession>
<accession>Q9VKD1</accession>
<evidence type="ECO:0000250" key="1"/>
<evidence type="ECO:0000255" key="2"/>
<evidence type="ECO:0000255" key="3">
    <source>
        <dbReference type="PROSITE-ProRule" id="PRU00521"/>
    </source>
</evidence>
<evidence type="ECO:0000256" key="4">
    <source>
        <dbReference type="SAM" id="MobiDB-lite"/>
    </source>
</evidence>
<evidence type="ECO:0000269" key="5">
    <source>
    </source>
</evidence>
<evidence type="ECO:0000305" key="6"/>
<dbReference type="EMBL" id="U67905">
    <property type="protein sequence ID" value="AAC47426.1"/>
    <property type="molecule type" value="Genomic_DNA"/>
</dbReference>
<dbReference type="EMBL" id="U80667">
    <property type="protein sequence ID" value="AAB38966.1"/>
    <property type="molecule type" value="mRNA"/>
</dbReference>
<dbReference type="EMBL" id="AE014134">
    <property type="protein sequence ID" value="AAF53145.1"/>
    <property type="molecule type" value="Genomic_DNA"/>
</dbReference>
<dbReference type="EMBL" id="AY069237">
    <property type="protein sequence ID" value="AAL39382.1"/>
    <property type="molecule type" value="mRNA"/>
</dbReference>
<dbReference type="RefSeq" id="NP_001285859.1">
    <property type="nucleotide sequence ID" value="NM_001298930.1"/>
</dbReference>
<dbReference type="RefSeq" id="NP_477096.1">
    <property type="nucleotide sequence ID" value="NM_057748.5"/>
</dbReference>
<dbReference type="SMR" id="P91657"/>
<dbReference type="BioGRID" id="60667">
    <property type="interactions" value="4"/>
</dbReference>
<dbReference type="FunCoup" id="P91657">
    <property type="interactions" value="14"/>
</dbReference>
<dbReference type="STRING" id="7227.FBpp0309539"/>
<dbReference type="GlyCosmos" id="P91657">
    <property type="glycosylation" value="1 site, No reported glycans"/>
</dbReference>
<dbReference type="GlyGen" id="P91657">
    <property type="glycosylation" value="1 site"/>
</dbReference>
<dbReference type="PaxDb" id="7227-FBpp0079875"/>
<dbReference type="DNASU" id="34615"/>
<dbReference type="EnsemblMetazoa" id="FBtr0080291">
    <property type="protein sequence ID" value="FBpp0079875"/>
    <property type="gene ID" value="FBgn0014019"/>
</dbReference>
<dbReference type="EnsemblMetazoa" id="FBtr0342591">
    <property type="protein sequence ID" value="FBpp0309539"/>
    <property type="gene ID" value="FBgn0014019"/>
</dbReference>
<dbReference type="GeneID" id="34615"/>
<dbReference type="KEGG" id="dme:Dmel_CG5279"/>
<dbReference type="AGR" id="FB:FBgn0014019"/>
<dbReference type="CTD" id="34615"/>
<dbReference type="FlyBase" id="FBgn0014019">
    <property type="gene designation" value="Rh5"/>
</dbReference>
<dbReference type="VEuPathDB" id="VectorBase:FBgn0014019"/>
<dbReference type="eggNOG" id="KOG3656">
    <property type="taxonomic scope" value="Eukaryota"/>
</dbReference>
<dbReference type="HOGENOM" id="CLU_009579_3_0_1"/>
<dbReference type="InParanoid" id="P91657"/>
<dbReference type="OMA" id="MLACKSV"/>
<dbReference type="OrthoDB" id="2105199at2759"/>
<dbReference type="PhylomeDB" id="P91657"/>
<dbReference type="Reactome" id="R-DME-416476">
    <property type="pathway name" value="G alpha (q) signalling events"/>
</dbReference>
<dbReference type="Reactome" id="R-DME-419771">
    <property type="pathway name" value="Opsins"/>
</dbReference>
<dbReference type="BioGRID-ORCS" id="34615">
    <property type="hits" value="0 hits in 1 CRISPR screen"/>
</dbReference>
<dbReference type="GenomeRNAi" id="34615"/>
<dbReference type="PRO" id="PR:P91657"/>
<dbReference type="Proteomes" id="UP000000803">
    <property type="component" value="Chromosome 2L"/>
</dbReference>
<dbReference type="Bgee" id="FBgn0014019">
    <property type="expression patterns" value="Expressed in photoreceptor cell R8 (Drosophila) in insect head and 76 other cell types or tissues"/>
</dbReference>
<dbReference type="ExpressionAtlas" id="P91657">
    <property type="expression patterns" value="baseline and differential"/>
</dbReference>
<dbReference type="GO" id="GO:0016020">
    <property type="term" value="C:membrane"/>
    <property type="evidence" value="ECO:0000250"/>
    <property type="project" value="FlyBase"/>
</dbReference>
<dbReference type="GO" id="GO:0005886">
    <property type="term" value="C:plasma membrane"/>
    <property type="evidence" value="ECO:0000318"/>
    <property type="project" value="GO_Central"/>
</dbReference>
<dbReference type="GO" id="GO:0016028">
    <property type="term" value="C:rhabdomere"/>
    <property type="evidence" value="ECO:0000314"/>
    <property type="project" value="FlyBase"/>
</dbReference>
<dbReference type="GO" id="GO:0033583">
    <property type="term" value="C:rhabdomere membrane"/>
    <property type="evidence" value="ECO:0007669"/>
    <property type="project" value="UniProtKB-SubCell"/>
</dbReference>
<dbReference type="GO" id="GO:0008020">
    <property type="term" value="F:G protein-coupled photoreceptor activity"/>
    <property type="evidence" value="ECO:0000316"/>
    <property type="project" value="FlyBase"/>
</dbReference>
<dbReference type="GO" id="GO:0016038">
    <property type="term" value="P:absorption of visible light"/>
    <property type="evidence" value="ECO:0000315"/>
    <property type="project" value="FlyBase"/>
</dbReference>
<dbReference type="GO" id="GO:0071482">
    <property type="term" value="P:cellular response to light stimulus"/>
    <property type="evidence" value="ECO:0000318"/>
    <property type="project" value="GO_Central"/>
</dbReference>
<dbReference type="GO" id="GO:0043153">
    <property type="term" value="P:entrainment of circadian clock by photoperiod"/>
    <property type="evidence" value="ECO:0000316"/>
    <property type="project" value="FlyBase"/>
</dbReference>
<dbReference type="GO" id="GO:0007186">
    <property type="term" value="P:G protein-coupled receptor signaling pathway"/>
    <property type="evidence" value="ECO:0000318"/>
    <property type="project" value="GO_Central"/>
</dbReference>
<dbReference type="GO" id="GO:0007602">
    <property type="term" value="P:phototransduction"/>
    <property type="evidence" value="ECO:0000316"/>
    <property type="project" value="FlyBase"/>
</dbReference>
<dbReference type="GO" id="GO:0009416">
    <property type="term" value="P:response to light stimulus"/>
    <property type="evidence" value="ECO:0000314"/>
    <property type="project" value="FlyBase"/>
</dbReference>
<dbReference type="GO" id="GO:0007605">
    <property type="term" value="P:sensory perception of sound"/>
    <property type="evidence" value="ECO:0000315"/>
    <property type="project" value="FlyBase"/>
</dbReference>
<dbReference type="GO" id="GO:0043052">
    <property type="term" value="P:thermotaxis"/>
    <property type="evidence" value="ECO:0000315"/>
    <property type="project" value="FlyBase"/>
</dbReference>
<dbReference type="GO" id="GO:0009588">
    <property type="term" value="P:UV-A, blue light phototransduction"/>
    <property type="evidence" value="ECO:0000303"/>
    <property type="project" value="FlyBase"/>
</dbReference>
<dbReference type="GO" id="GO:0007601">
    <property type="term" value="P:visual perception"/>
    <property type="evidence" value="ECO:0007669"/>
    <property type="project" value="UniProtKB-KW"/>
</dbReference>
<dbReference type="CDD" id="cd15079">
    <property type="entry name" value="7tmA_photoreceptors_insect"/>
    <property type="match status" value="1"/>
</dbReference>
<dbReference type="FunFam" id="1.20.1070.10:FF:000044">
    <property type="entry name" value="Opsin, ultraviolet-sensitive"/>
    <property type="match status" value="1"/>
</dbReference>
<dbReference type="Gene3D" id="1.20.1070.10">
    <property type="entry name" value="Rhodopsin 7-helix transmembrane proteins"/>
    <property type="match status" value="1"/>
</dbReference>
<dbReference type="InterPro" id="IPR050125">
    <property type="entry name" value="GPCR_opsins"/>
</dbReference>
<dbReference type="InterPro" id="IPR000276">
    <property type="entry name" value="GPCR_Rhodpsn"/>
</dbReference>
<dbReference type="InterPro" id="IPR017452">
    <property type="entry name" value="GPCR_Rhodpsn_7TM"/>
</dbReference>
<dbReference type="InterPro" id="IPR001760">
    <property type="entry name" value="Opsin"/>
</dbReference>
<dbReference type="InterPro" id="IPR027430">
    <property type="entry name" value="Retinal_BS"/>
</dbReference>
<dbReference type="PANTHER" id="PTHR24240">
    <property type="entry name" value="OPSIN"/>
    <property type="match status" value="1"/>
</dbReference>
<dbReference type="Pfam" id="PF00001">
    <property type="entry name" value="7tm_1"/>
    <property type="match status" value="1"/>
</dbReference>
<dbReference type="PRINTS" id="PR00237">
    <property type="entry name" value="GPCRRHODOPSN"/>
</dbReference>
<dbReference type="PRINTS" id="PR00577">
    <property type="entry name" value="OPSINRH3RH4"/>
</dbReference>
<dbReference type="SUPFAM" id="SSF81321">
    <property type="entry name" value="Family A G protein-coupled receptor-like"/>
    <property type="match status" value="1"/>
</dbReference>
<dbReference type="PROSITE" id="PS00237">
    <property type="entry name" value="G_PROTEIN_RECEP_F1_1"/>
    <property type="match status" value="1"/>
</dbReference>
<dbReference type="PROSITE" id="PS50262">
    <property type="entry name" value="G_PROTEIN_RECEP_F1_2"/>
    <property type="match status" value="1"/>
</dbReference>
<dbReference type="PROSITE" id="PS00238">
    <property type="entry name" value="OPSIN"/>
    <property type="match status" value="1"/>
</dbReference>
<sequence>MHINGPSGPQAYVNDSLGDGSVFPMGHGYPAEYQHMVHAHWRGFREAPIYYHAGFYIAFIVLMLSSIFGNGLVIWIFSTSKSLRTPSNLLILNLAIFDLFMCTNMPHYLINATVGYIVGGDLGCDIYALNGGISGMGASITNAFIAFDRYKTISNPIDGRLSYGQIVLLILFTWLWATPFSVLPLFQIWGRYQPEGFLTTCSFDYLTNTDENRLFVRTIFVWSYVIPMTMILVSYYKLFTHVRVHEKMLAEQAKKMNVKSLSANANADNMSVELRIAKAALIIYMLFILAWTPYSVVALIGCFGEQQLITPFVSMLPCLACKSVSCLDPWVYATSHPKYRLELERRLPWLGIREKHATSGTSGGQESVASVSGDTLALSVQN</sequence>
<proteinExistence type="evidence at transcript level"/>